<gene>
    <name evidence="1" type="primary">eno</name>
    <name type="ordered locus">Rxyl_0912</name>
</gene>
<proteinExistence type="inferred from homology"/>
<name>ENO_RUBXD</name>
<sequence>MTEIVAVRGREILDSRGNPTLEVEVVTAAGFVGRAAVPSGASTGQNEAVELRDGEGGRYGGKGVLRAVANVEGELAEAVVGMDVTDQRALDLAMIEADGTENKGRLGANAMLGVSLAAARAAAEYAGLPLYRYLGGPGAHVLPVPCANILNGGAHAANNVDFQEFMVVPVGFESYREALRAVAEIYAALKKLLAERGLAGGIGDEGGFAPDLSSNGEALGLLSEAVERSGYSLGEQVCFALDPAASEFYEGGRYELSGEGRSLERGEMVDYYVRLCGEYPIISIEDGLAEDDWEGWEMISARLGGRVQLVGDDLFVTNPKILRKGIERGIANSILVKVNQIGTLTETFETMDLAHKSGYTAMVSHRSGETDDTTIADLAVAVNAGQIKTGAPARGERVAKYNQLLRIEESLGEAAVYPGLGAFNPRMREG</sequence>
<organism>
    <name type="scientific">Rubrobacter xylanophilus (strain DSM 9941 / JCM 11954 / NBRC 16129 / PRD-1)</name>
    <dbReference type="NCBI Taxonomy" id="266117"/>
    <lineage>
        <taxon>Bacteria</taxon>
        <taxon>Bacillati</taxon>
        <taxon>Actinomycetota</taxon>
        <taxon>Rubrobacteria</taxon>
        <taxon>Rubrobacterales</taxon>
        <taxon>Rubrobacteraceae</taxon>
        <taxon>Rubrobacter</taxon>
    </lineage>
</organism>
<reference key="1">
    <citation type="submission" date="2006-06" db="EMBL/GenBank/DDBJ databases">
        <title>Complete sequence of Rubrobacter xylanophilus DSM 9941.</title>
        <authorList>
            <consortium name="US DOE Joint Genome Institute"/>
            <person name="Copeland A."/>
            <person name="Lucas S."/>
            <person name="Lapidus A."/>
            <person name="Barry K."/>
            <person name="Detter J.C."/>
            <person name="Glavina del Rio T."/>
            <person name="Hammon N."/>
            <person name="Israni S."/>
            <person name="Dalin E."/>
            <person name="Tice H."/>
            <person name="Pitluck S."/>
            <person name="Munk A.C."/>
            <person name="Brettin T."/>
            <person name="Bruce D."/>
            <person name="Han C."/>
            <person name="Tapia R."/>
            <person name="Gilna P."/>
            <person name="Schmutz J."/>
            <person name="Larimer F."/>
            <person name="Land M."/>
            <person name="Hauser L."/>
            <person name="Kyrpides N."/>
            <person name="Lykidis A."/>
            <person name="da Costa M.S."/>
            <person name="Rainey F.A."/>
            <person name="Empadinhas N."/>
            <person name="Jolivet E."/>
            <person name="Battista J.R."/>
            <person name="Richardson P."/>
        </authorList>
    </citation>
    <scope>NUCLEOTIDE SEQUENCE [LARGE SCALE GENOMIC DNA]</scope>
    <source>
        <strain>DSM 9941 / JCM 11954 / NBRC 16129 / PRD-1</strain>
    </source>
</reference>
<feature type="chain" id="PRO_0000267096" description="Enolase">
    <location>
        <begin position="1"/>
        <end position="430"/>
    </location>
</feature>
<feature type="active site" description="Proton donor" evidence="1">
    <location>
        <position position="205"/>
    </location>
</feature>
<feature type="active site" description="Proton acceptor" evidence="1">
    <location>
        <position position="337"/>
    </location>
</feature>
<feature type="binding site" evidence="1">
    <location>
        <position position="163"/>
    </location>
    <ligand>
        <name>(2R)-2-phosphoglycerate</name>
        <dbReference type="ChEBI" id="CHEBI:58289"/>
    </ligand>
</feature>
<feature type="binding site" evidence="1">
    <location>
        <position position="242"/>
    </location>
    <ligand>
        <name>Mg(2+)</name>
        <dbReference type="ChEBI" id="CHEBI:18420"/>
    </ligand>
</feature>
<feature type="binding site" evidence="1">
    <location>
        <position position="285"/>
    </location>
    <ligand>
        <name>Mg(2+)</name>
        <dbReference type="ChEBI" id="CHEBI:18420"/>
    </ligand>
</feature>
<feature type="binding site" evidence="1">
    <location>
        <position position="312"/>
    </location>
    <ligand>
        <name>Mg(2+)</name>
        <dbReference type="ChEBI" id="CHEBI:18420"/>
    </ligand>
</feature>
<feature type="binding site" evidence="1">
    <location>
        <position position="337"/>
    </location>
    <ligand>
        <name>(2R)-2-phosphoglycerate</name>
        <dbReference type="ChEBI" id="CHEBI:58289"/>
    </ligand>
</feature>
<feature type="binding site" evidence="1">
    <location>
        <position position="366"/>
    </location>
    <ligand>
        <name>(2R)-2-phosphoglycerate</name>
        <dbReference type="ChEBI" id="CHEBI:58289"/>
    </ligand>
</feature>
<feature type="binding site" evidence="1">
    <location>
        <position position="367"/>
    </location>
    <ligand>
        <name>(2R)-2-phosphoglycerate</name>
        <dbReference type="ChEBI" id="CHEBI:58289"/>
    </ligand>
</feature>
<feature type="binding site" evidence="1">
    <location>
        <position position="388"/>
    </location>
    <ligand>
        <name>(2R)-2-phosphoglycerate</name>
        <dbReference type="ChEBI" id="CHEBI:58289"/>
    </ligand>
</feature>
<accession>Q1AXJ9</accession>
<evidence type="ECO:0000255" key="1">
    <source>
        <dbReference type="HAMAP-Rule" id="MF_00318"/>
    </source>
</evidence>
<dbReference type="EC" id="4.2.1.11" evidence="1"/>
<dbReference type="EMBL" id="CP000386">
    <property type="protein sequence ID" value="ABG03879.1"/>
    <property type="molecule type" value="Genomic_DNA"/>
</dbReference>
<dbReference type="RefSeq" id="WP_011563897.1">
    <property type="nucleotide sequence ID" value="NC_008148.1"/>
</dbReference>
<dbReference type="SMR" id="Q1AXJ9"/>
<dbReference type="STRING" id="266117.Rxyl_0912"/>
<dbReference type="KEGG" id="rxy:Rxyl_0912"/>
<dbReference type="eggNOG" id="COG0148">
    <property type="taxonomic scope" value="Bacteria"/>
</dbReference>
<dbReference type="HOGENOM" id="CLU_031223_2_1_11"/>
<dbReference type="OrthoDB" id="9804716at2"/>
<dbReference type="PhylomeDB" id="Q1AXJ9"/>
<dbReference type="UniPathway" id="UPA00109">
    <property type="reaction ID" value="UER00187"/>
</dbReference>
<dbReference type="Proteomes" id="UP000006637">
    <property type="component" value="Chromosome"/>
</dbReference>
<dbReference type="GO" id="GO:0009986">
    <property type="term" value="C:cell surface"/>
    <property type="evidence" value="ECO:0007669"/>
    <property type="project" value="UniProtKB-SubCell"/>
</dbReference>
<dbReference type="GO" id="GO:0005576">
    <property type="term" value="C:extracellular region"/>
    <property type="evidence" value="ECO:0007669"/>
    <property type="project" value="UniProtKB-SubCell"/>
</dbReference>
<dbReference type="GO" id="GO:0000015">
    <property type="term" value="C:phosphopyruvate hydratase complex"/>
    <property type="evidence" value="ECO:0007669"/>
    <property type="project" value="InterPro"/>
</dbReference>
<dbReference type="GO" id="GO:0000287">
    <property type="term" value="F:magnesium ion binding"/>
    <property type="evidence" value="ECO:0007669"/>
    <property type="project" value="UniProtKB-UniRule"/>
</dbReference>
<dbReference type="GO" id="GO:0004634">
    <property type="term" value="F:phosphopyruvate hydratase activity"/>
    <property type="evidence" value="ECO:0007669"/>
    <property type="project" value="UniProtKB-UniRule"/>
</dbReference>
<dbReference type="GO" id="GO:0006096">
    <property type="term" value="P:glycolytic process"/>
    <property type="evidence" value="ECO:0007669"/>
    <property type="project" value="UniProtKB-UniRule"/>
</dbReference>
<dbReference type="CDD" id="cd03313">
    <property type="entry name" value="enolase"/>
    <property type="match status" value="1"/>
</dbReference>
<dbReference type="FunFam" id="3.20.20.120:FF:000001">
    <property type="entry name" value="Enolase"/>
    <property type="match status" value="1"/>
</dbReference>
<dbReference type="FunFam" id="3.30.390.10:FF:000001">
    <property type="entry name" value="Enolase"/>
    <property type="match status" value="1"/>
</dbReference>
<dbReference type="Gene3D" id="3.20.20.120">
    <property type="entry name" value="Enolase-like C-terminal domain"/>
    <property type="match status" value="1"/>
</dbReference>
<dbReference type="Gene3D" id="3.30.390.10">
    <property type="entry name" value="Enolase-like, N-terminal domain"/>
    <property type="match status" value="1"/>
</dbReference>
<dbReference type="HAMAP" id="MF_00318">
    <property type="entry name" value="Enolase"/>
    <property type="match status" value="1"/>
</dbReference>
<dbReference type="InterPro" id="IPR000941">
    <property type="entry name" value="Enolase"/>
</dbReference>
<dbReference type="InterPro" id="IPR036849">
    <property type="entry name" value="Enolase-like_C_sf"/>
</dbReference>
<dbReference type="InterPro" id="IPR029017">
    <property type="entry name" value="Enolase-like_N"/>
</dbReference>
<dbReference type="InterPro" id="IPR020810">
    <property type="entry name" value="Enolase_C"/>
</dbReference>
<dbReference type="InterPro" id="IPR020809">
    <property type="entry name" value="Enolase_CS"/>
</dbReference>
<dbReference type="InterPro" id="IPR020811">
    <property type="entry name" value="Enolase_N"/>
</dbReference>
<dbReference type="NCBIfam" id="TIGR01060">
    <property type="entry name" value="eno"/>
    <property type="match status" value="1"/>
</dbReference>
<dbReference type="PANTHER" id="PTHR11902">
    <property type="entry name" value="ENOLASE"/>
    <property type="match status" value="1"/>
</dbReference>
<dbReference type="PANTHER" id="PTHR11902:SF1">
    <property type="entry name" value="ENOLASE"/>
    <property type="match status" value="1"/>
</dbReference>
<dbReference type="Pfam" id="PF00113">
    <property type="entry name" value="Enolase_C"/>
    <property type="match status" value="1"/>
</dbReference>
<dbReference type="Pfam" id="PF03952">
    <property type="entry name" value="Enolase_N"/>
    <property type="match status" value="1"/>
</dbReference>
<dbReference type="PIRSF" id="PIRSF001400">
    <property type="entry name" value="Enolase"/>
    <property type="match status" value="1"/>
</dbReference>
<dbReference type="PRINTS" id="PR00148">
    <property type="entry name" value="ENOLASE"/>
</dbReference>
<dbReference type="SFLD" id="SFLDS00001">
    <property type="entry name" value="Enolase"/>
    <property type="match status" value="1"/>
</dbReference>
<dbReference type="SFLD" id="SFLDF00002">
    <property type="entry name" value="enolase"/>
    <property type="match status" value="1"/>
</dbReference>
<dbReference type="SMART" id="SM01192">
    <property type="entry name" value="Enolase_C"/>
    <property type="match status" value="1"/>
</dbReference>
<dbReference type="SMART" id="SM01193">
    <property type="entry name" value="Enolase_N"/>
    <property type="match status" value="1"/>
</dbReference>
<dbReference type="SUPFAM" id="SSF51604">
    <property type="entry name" value="Enolase C-terminal domain-like"/>
    <property type="match status" value="1"/>
</dbReference>
<dbReference type="SUPFAM" id="SSF54826">
    <property type="entry name" value="Enolase N-terminal domain-like"/>
    <property type="match status" value="1"/>
</dbReference>
<dbReference type="PROSITE" id="PS00164">
    <property type="entry name" value="ENOLASE"/>
    <property type="match status" value="1"/>
</dbReference>
<comment type="function">
    <text evidence="1">Catalyzes the reversible conversion of 2-phosphoglycerate (2-PG) into phosphoenolpyruvate (PEP). It is essential for the degradation of carbohydrates via glycolysis.</text>
</comment>
<comment type="catalytic activity">
    <reaction evidence="1">
        <text>(2R)-2-phosphoglycerate = phosphoenolpyruvate + H2O</text>
        <dbReference type="Rhea" id="RHEA:10164"/>
        <dbReference type="ChEBI" id="CHEBI:15377"/>
        <dbReference type="ChEBI" id="CHEBI:58289"/>
        <dbReference type="ChEBI" id="CHEBI:58702"/>
        <dbReference type="EC" id="4.2.1.11"/>
    </reaction>
</comment>
<comment type="cofactor">
    <cofactor evidence="1">
        <name>Mg(2+)</name>
        <dbReference type="ChEBI" id="CHEBI:18420"/>
    </cofactor>
    <text evidence="1">Binds a second Mg(2+) ion via substrate during catalysis.</text>
</comment>
<comment type="pathway">
    <text evidence="1">Carbohydrate degradation; glycolysis; pyruvate from D-glyceraldehyde 3-phosphate: step 4/5.</text>
</comment>
<comment type="subcellular location">
    <subcellularLocation>
        <location evidence="1">Cytoplasm</location>
    </subcellularLocation>
    <subcellularLocation>
        <location evidence="1">Secreted</location>
    </subcellularLocation>
    <subcellularLocation>
        <location evidence="1">Cell surface</location>
    </subcellularLocation>
    <text evidence="1">Fractions of enolase are present in both the cytoplasm and on the cell surface.</text>
</comment>
<comment type="similarity">
    <text evidence="1">Belongs to the enolase family.</text>
</comment>
<protein>
    <recommendedName>
        <fullName evidence="1">Enolase</fullName>
        <ecNumber evidence="1">4.2.1.11</ecNumber>
    </recommendedName>
    <alternativeName>
        <fullName evidence="1">2-phospho-D-glycerate hydro-lyase</fullName>
    </alternativeName>
    <alternativeName>
        <fullName evidence="1">2-phosphoglycerate dehydratase</fullName>
    </alternativeName>
</protein>
<keyword id="KW-0963">Cytoplasm</keyword>
<keyword id="KW-0324">Glycolysis</keyword>
<keyword id="KW-0456">Lyase</keyword>
<keyword id="KW-0460">Magnesium</keyword>
<keyword id="KW-0479">Metal-binding</keyword>
<keyword id="KW-1185">Reference proteome</keyword>
<keyword id="KW-0964">Secreted</keyword>